<evidence type="ECO:0000255" key="1">
    <source>
        <dbReference type="HAMAP-Rule" id="MF_01910"/>
    </source>
</evidence>
<evidence type="ECO:0000256" key="2">
    <source>
        <dbReference type="SAM" id="MobiDB-lite"/>
    </source>
</evidence>
<reference key="1">
    <citation type="submission" date="2008-03" db="EMBL/GenBank/DDBJ databases">
        <title>Complete sequence of Thermoproteus neutrophilus V24Sta.</title>
        <authorList>
            <consortium name="US DOE Joint Genome Institute"/>
            <person name="Copeland A."/>
            <person name="Lucas S."/>
            <person name="Lapidus A."/>
            <person name="Glavina del Rio T."/>
            <person name="Dalin E."/>
            <person name="Tice H."/>
            <person name="Bruce D."/>
            <person name="Goodwin L."/>
            <person name="Pitluck S."/>
            <person name="Sims D."/>
            <person name="Brettin T."/>
            <person name="Detter J.C."/>
            <person name="Han C."/>
            <person name="Kuske C.R."/>
            <person name="Schmutz J."/>
            <person name="Larimer F."/>
            <person name="Land M."/>
            <person name="Hauser L."/>
            <person name="Kyrpides N."/>
            <person name="Mikhailova N."/>
            <person name="Biddle J.F."/>
            <person name="Zhang Z."/>
            <person name="Fitz-Gibbon S.T."/>
            <person name="Lowe T.M."/>
            <person name="Saltikov C."/>
            <person name="House C.H."/>
            <person name="Richardson P."/>
        </authorList>
    </citation>
    <scope>NUCLEOTIDE SEQUENCE [LARGE SCALE GENOMIC DNA]</scope>
    <source>
        <strain>DSM 2338 / JCM 9278 / NBRC 100436 / V24Sta</strain>
    </source>
</reference>
<sequence>MFRARIRGIYATALTKLALDWGFKVVQPTPQIAERFGLRPDPSPPDVTVKDHESKTGVVAIGDCPAVDHLLERLREYADPVVAKASAGLHDVFVGRVVGEGLVEGPGGLMEVPGRYVLQPGAASVFTVVKPPVGPLRGVAVPEIVVDGKLLELNTTGRVAYSRHIGEEERLRLRILAETRLKAYASIGLRFKSSAKYAGEEELAREAEELYRELLRLSQGGPPGALLRRGRCLAVVLFDKRAKFKLDEARAAVVPTVRGHHALRGQGLGRCLDLLDHVGADVYERAAAFLARGRVAIYHVKPWGEVVKMRGEVVKALEDVLVVKRTLKPGGVLDGIGARIEPGTYALTCVPRSGGYVVHSYYSASGVYLGTYVNANTEPEWGRRVVYIDLLVDKAYGPDGVERVLDEEELQRYAHMLPERLRRPEAPGGKICTPEGLTSAPPRSSSA</sequence>
<comment type="function">
    <text evidence="1">Probable RNase involved in rRNA stability through maturation and/or degradation of precursor rRNAs. Binds to RNA in loop regions with AU-rich sequences.</text>
</comment>
<comment type="similarity">
    <text evidence="1">Belongs to the FAU-1 family.</text>
</comment>
<organism>
    <name type="scientific">Pyrobaculum neutrophilum (strain DSM 2338 / JCM 9278 / NBRC 100436 / V24Sta)</name>
    <name type="common">Thermoproteus neutrophilus</name>
    <dbReference type="NCBI Taxonomy" id="444157"/>
    <lineage>
        <taxon>Archaea</taxon>
        <taxon>Thermoproteota</taxon>
        <taxon>Thermoprotei</taxon>
        <taxon>Thermoproteales</taxon>
        <taxon>Thermoproteaceae</taxon>
        <taxon>Pyrobaculum</taxon>
    </lineage>
</organism>
<keyword id="KW-0255">Endonuclease</keyword>
<keyword id="KW-0378">Hydrolase</keyword>
<keyword id="KW-0540">Nuclease</keyword>
<keyword id="KW-0694">RNA-binding</keyword>
<keyword id="KW-0698">rRNA processing</keyword>
<feature type="chain" id="PRO_1000188788" description="Probable ribonuclease FAU-1">
    <location>
        <begin position="1"/>
        <end position="447"/>
    </location>
</feature>
<feature type="region of interest" description="Disordered" evidence="2">
    <location>
        <begin position="424"/>
        <end position="447"/>
    </location>
</feature>
<protein>
    <recommendedName>
        <fullName evidence="1">Probable ribonuclease FAU-1</fullName>
        <ecNumber evidence="1">3.1.26.-</ecNumber>
    </recommendedName>
    <alternativeName>
        <fullName evidence="1">RNA-binding protein FAU-1</fullName>
    </alternativeName>
</protein>
<accession>B1YDP2</accession>
<proteinExistence type="inferred from homology"/>
<gene>
    <name evidence="1" type="primary">fau-1</name>
    <name type="ordered locus">Tneu_0970</name>
</gene>
<dbReference type="EC" id="3.1.26.-" evidence="1"/>
<dbReference type="EMBL" id="CP001014">
    <property type="protein sequence ID" value="ACB39905.1"/>
    <property type="molecule type" value="Genomic_DNA"/>
</dbReference>
<dbReference type="RefSeq" id="WP_012350325.1">
    <property type="nucleotide sequence ID" value="NC_010525.1"/>
</dbReference>
<dbReference type="SMR" id="B1YDP2"/>
<dbReference type="STRING" id="444157.Tneu_0970"/>
<dbReference type="GeneID" id="6164632"/>
<dbReference type="KEGG" id="tne:Tneu_0970"/>
<dbReference type="eggNOG" id="arCOG04307">
    <property type="taxonomic scope" value="Archaea"/>
</dbReference>
<dbReference type="HOGENOM" id="CLU_044303_0_0_2"/>
<dbReference type="OrthoDB" id="84798at2157"/>
<dbReference type="Proteomes" id="UP000001694">
    <property type="component" value="Chromosome"/>
</dbReference>
<dbReference type="GO" id="GO:0035925">
    <property type="term" value="F:mRNA 3'-UTR AU-rich region binding"/>
    <property type="evidence" value="ECO:0007669"/>
    <property type="project" value="UniProtKB-UniRule"/>
</dbReference>
<dbReference type="GO" id="GO:0016891">
    <property type="term" value="F:RNA endonuclease activity, producing 5'-phosphomonoesters"/>
    <property type="evidence" value="ECO:0007669"/>
    <property type="project" value="UniProtKB-UniRule"/>
</dbReference>
<dbReference type="GO" id="GO:0006364">
    <property type="term" value="P:rRNA processing"/>
    <property type="evidence" value="ECO:0007669"/>
    <property type="project" value="UniProtKB-UniRule"/>
</dbReference>
<dbReference type="Gene3D" id="2.40.380.10">
    <property type="entry name" value="FomD-like"/>
    <property type="match status" value="1"/>
</dbReference>
<dbReference type="HAMAP" id="MF_01910">
    <property type="entry name" value="RNA_binding_AU_1"/>
    <property type="match status" value="1"/>
</dbReference>
<dbReference type="InterPro" id="IPR007295">
    <property type="entry name" value="DUF402"/>
</dbReference>
<dbReference type="InterPro" id="IPR035930">
    <property type="entry name" value="FomD-like_sf"/>
</dbReference>
<dbReference type="InterPro" id="IPR050212">
    <property type="entry name" value="Ntdp-like"/>
</dbReference>
<dbReference type="InterPro" id="IPR016730">
    <property type="entry name" value="RNA-bd_FAU-1"/>
</dbReference>
<dbReference type="PANTHER" id="PTHR39159">
    <property type="match status" value="1"/>
</dbReference>
<dbReference type="PANTHER" id="PTHR39159:SF1">
    <property type="entry name" value="UPF0374 PROTEIN YGAC"/>
    <property type="match status" value="1"/>
</dbReference>
<dbReference type="Pfam" id="PF04167">
    <property type="entry name" value="DUF402"/>
    <property type="match status" value="1"/>
</dbReference>
<dbReference type="SUPFAM" id="SSF159234">
    <property type="entry name" value="FomD-like"/>
    <property type="match status" value="1"/>
</dbReference>
<name>FAU1_PYRNV</name>